<proteinExistence type="evidence at protein level"/>
<accession>Q8SQW6</accession>
<dbReference type="EC" id="2.7.7.14"/>
<dbReference type="EMBL" id="AL590450">
    <property type="protein sequence ID" value="CAD25997.1"/>
    <property type="molecule type" value="Genomic_DNA"/>
</dbReference>
<dbReference type="RefSeq" id="NP_586393.1">
    <property type="nucleotide sequence ID" value="NM_001042226.1"/>
</dbReference>
<dbReference type="SMR" id="Q8SQW6"/>
<dbReference type="FunCoup" id="Q8SQW6">
    <property type="interactions" value="125"/>
</dbReference>
<dbReference type="STRING" id="284813.Q8SQW6"/>
<dbReference type="GeneID" id="860046"/>
<dbReference type="KEGG" id="ecu:ECU11_0870"/>
<dbReference type="VEuPathDB" id="MicrosporidiaDB:ECU11_0870"/>
<dbReference type="HOGENOM" id="CLU_031246_2_2_1"/>
<dbReference type="InParanoid" id="Q8SQW6"/>
<dbReference type="OMA" id="FESNNWV"/>
<dbReference type="OrthoDB" id="40021at2759"/>
<dbReference type="UniPathway" id="UPA00558">
    <property type="reaction ID" value="UER00742"/>
</dbReference>
<dbReference type="Proteomes" id="UP000000819">
    <property type="component" value="Chromosome XI"/>
</dbReference>
<dbReference type="GO" id="GO:0005737">
    <property type="term" value="C:cytoplasm"/>
    <property type="evidence" value="ECO:0007669"/>
    <property type="project" value="TreeGrafter"/>
</dbReference>
<dbReference type="GO" id="GO:0004306">
    <property type="term" value="F:ethanolamine-phosphate cytidylyltransferase activity"/>
    <property type="evidence" value="ECO:0007669"/>
    <property type="project" value="UniProtKB-EC"/>
</dbReference>
<dbReference type="GO" id="GO:0006646">
    <property type="term" value="P:phosphatidylethanolamine biosynthetic process"/>
    <property type="evidence" value="ECO:0007669"/>
    <property type="project" value="UniProtKB-UniPathway"/>
</dbReference>
<dbReference type="Gene3D" id="3.40.50.620">
    <property type="entry name" value="HUPs"/>
    <property type="match status" value="2"/>
</dbReference>
<dbReference type="InterPro" id="IPR004821">
    <property type="entry name" value="Cyt_trans-like"/>
</dbReference>
<dbReference type="InterPro" id="IPR044608">
    <property type="entry name" value="Ect1/PCYT2"/>
</dbReference>
<dbReference type="InterPro" id="IPR014729">
    <property type="entry name" value="Rossmann-like_a/b/a_fold"/>
</dbReference>
<dbReference type="NCBIfam" id="TIGR00125">
    <property type="entry name" value="cyt_tran_rel"/>
    <property type="match status" value="2"/>
</dbReference>
<dbReference type="PANTHER" id="PTHR45780">
    <property type="entry name" value="ETHANOLAMINE-PHOSPHATE CYTIDYLYLTRANSFERASE"/>
    <property type="match status" value="1"/>
</dbReference>
<dbReference type="PANTHER" id="PTHR45780:SF2">
    <property type="entry name" value="ETHANOLAMINE-PHOSPHATE CYTIDYLYLTRANSFERASE"/>
    <property type="match status" value="1"/>
</dbReference>
<dbReference type="Pfam" id="PF01467">
    <property type="entry name" value="CTP_transf_like"/>
    <property type="match status" value="2"/>
</dbReference>
<dbReference type="SUPFAM" id="SSF52374">
    <property type="entry name" value="Nucleotidylyl transferase"/>
    <property type="match status" value="2"/>
</dbReference>
<dbReference type="PROSITE" id="PS50007">
    <property type="entry name" value="PIPLC_X_DOMAIN"/>
    <property type="match status" value="1"/>
</dbReference>
<name>ECT1_ENCCU</name>
<protein>
    <recommendedName>
        <fullName>Probable ethanolamine-phosphate cytidylyltransferase</fullName>
        <ecNumber>2.7.7.14</ecNumber>
    </recommendedName>
    <alternativeName>
        <fullName>CTP:phosphoethanolamine cytidylyltransferase</fullName>
    </alternativeName>
    <alternativeName>
        <fullName>Phosphorylethanolamine transferase</fullName>
    </alternativeName>
</protein>
<organism>
    <name type="scientific">Encephalitozoon cuniculi (strain GB-M1)</name>
    <name type="common">Microsporidian parasite</name>
    <dbReference type="NCBI Taxonomy" id="284813"/>
    <lineage>
        <taxon>Eukaryota</taxon>
        <taxon>Fungi</taxon>
        <taxon>Fungi incertae sedis</taxon>
        <taxon>Microsporidia</taxon>
        <taxon>Unikaryonidae</taxon>
        <taxon>Encephalitozoon</taxon>
    </lineage>
</organism>
<feature type="chain" id="PRO_0000381749" description="Probable ethanolamine-phosphate cytidylyltransferase">
    <location>
        <begin position="1"/>
        <end position="322"/>
    </location>
</feature>
<gene>
    <name type="primary">MUQ1</name>
    <name type="ordered locus">ECU11_0870</name>
</gene>
<sequence>MASHEIQKVWADGCFDMFHYGHANALRQSKALGDYLIAGVHSSLSINQEKGLPVMEDEERYEVVEGCRYVDEVVRDAPFVTQTSMIKEYGVSIVAHGNDIVLDSSGQDSYCQVRRMGIFREVERTFGISTTEIVGRMMLKNRGSWLDGENGESSKDSGYHDRLLSLFMSSMGREKRGKVVFMDGNFDLFHAGHVASLRIARGMGDYLIVGIHDDETTKEYTRSYPVLSTKERMLTLMACRYVDEIVVSPYLVGSEFIKRHGIDVVAPSFDSKDLSRYDGIKDVVEHSYAENRFNYLSAEHIVNRIISNYQDYANRQKKRTGK</sequence>
<reference key="1">
    <citation type="journal article" date="2001" name="Nature">
        <title>Genome sequence and gene compaction of the eukaryote parasite Encephalitozoon cuniculi.</title>
        <authorList>
            <person name="Katinka M.D."/>
            <person name="Duprat S."/>
            <person name="Cornillot E."/>
            <person name="Metenier G."/>
            <person name="Thomarat F."/>
            <person name="Prensier G."/>
            <person name="Barbe V."/>
            <person name="Peyretaillade E."/>
            <person name="Brottier P."/>
            <person name="Wincker P."/>
            <person name="Delbac F."/>
            <person name="El Alaoui H."/>
            <person name="Peyret P."/>
            <person name="Saurin W."/>
            <person name="Gouy M."/>
            <person name="Weissenbach J."/>
            <person name="Vivares C.P."/>
        </authorList>
    </citation>
    <scope>NUCLEOTIDE SEQUENCE [LARGE SCALE GENOMIC DNA]</scope>
    <source>
        <strain>GB-M1</strain>
    </source>
</reference>
<reference key="2">
    <citation type="journal article" date="2006" name="Proteomics">
        <title>Proteomic analysis of the eukaryotic parasite Encephalitozoon cuniculi (microsporidia): a reference map for proteins expressed in late sporogonial stages.</title>
        <authorList>
            <person name="Brosson D."/>
            <person name="Kuhn L."/>
            <person name="Delbac F."/>
            <person name="Garin J."/>
            <person name="Vivares C.P."/>
            <person name="Texier C."/>
        </authorList>
    </citation>
    <scope>IDENTIFICATION BY MASS SPECTROMETRY [LARGE SCALE ANALYSIS]</scope>
    <scope>DEVELOPMENTAL STAGE</scope>
</reference>
<keyword id="KW-0444">Lipid biosynthesis</keyword>
<keyword id="KW-0443">Lipid metabolism</keyword>
<keyword id="KW-0548">Nucleotidyltransferase</keyword>
<keyword id="KW-0594">Phospholipid biosynthesis</keyword>
<keyword id="KW-1208">Phospholipid metabolism</keyword>
<keyword id="KW-1185">Reference proteome</keyword>
<keyword id="KW-0808">Transferase</keyword>
<comment type="catalytic activity">
    <reaction>
        <text>phosphoethanolamine + CTP + H(+) = CDP-ethanolamine + diphosphate</text>
        <dbReference type="Rhea" id="RHEA:24592"/>
        <dbReference type="ChEBI" id="CHEBI:15378"/>
        <dbReference type="ChEBI" id="CHEBI:33019"/>
        <dbReference type="ChEBI" id="CHEBI:37563"/>
        <dbReference type="ChEBI" id="CHEBI:57876"/>
        <dbReference type="ChEBI" id="CHEBI:58190"/>
        <dbReference type="EC" id="2.7.7.14"/>
    </reaction>
</comment>
<comment type="pathway">
    <text>Phospholipid metabolism; phosphatidylethanolamine biosynthesis; phosphatidylethanolamine from ethanolamine: step 2/3.</text>
</comment>
<comment type="developmental stage">
    <text evidence="1">Expressed in late sporogonial stages.</text>
</comment>
<comment type="similarity">
    <text evidence="2">Belongs to the cytidylyltransferase family.</text>
</comment>
<evidence type="ECO:0000269" key="1">
    <source>
    </source>
</evidence>
<evidence type="ECO:0000305" key="2"/>